<evidence type="ECO:0000250" key="1">
    <source>
        <dbReference type="UniProtKB" id="P08200"/>
    </source>
</evidence>
<evidence type="ECO:0000269" key="2">
    <source>
    </source>
</evidence>
<evidence type="ECO:0000303" key="3">
    <source>
    </source>
</evidence>
<evidence type="ECO:0000305" key="4"/>
<feature type="chain" id="PRO_0000083547" description="Isocitrate dehydrogenase [NADP]">
    <location>
        <begin position="1"/>
        <end position="473"/>
    </location>
</feature>
<feature type="binding site" evidence="1">
    <location>
        <position position="104"/>
    </location>
    <ligand>
        <name>NADP(+)</name>
        <dbReference type="ChEBI" id="CHEBI:58349"/>
    </ligand>
</feature>
<feature type="binding site" evidence="1">
    <location>
        <position position="113"/>
    </location>
    <ligand>
        <name>D-threo-isocitrate</name>
        <dbReference type="ChEBI" id="CHEBI:15562"/>
    </ligand>
</feature>
<feature type="binding site" evidence="1">
    <location>
        <position position="115"/>
    </location>
    <ligand>
        <name>D-threo-isocitrate</name>
        <dbReference type="ChEBI" id="CHEBI:15562"/>
    </ligand>
</feature>
<feature type="binding site" evidence="1">
    <location>
        <position position="119"/>
    </location>
    <ligand>
        <name>D-threo-isocitrate</name>
        <dbReference type="ChEBI" id="CHEBI:15562"/>
    </ligand>
</feature>
<feature type="binding site" evidence="1">
    <location>
        <position position="129"/>
    </location>
    <ligand>
        <name>D-threo-isocitrate</name>
        <dbReference type="ChEBI" id="CHEBI:15562"/>
    </ligand>
</feature>
<feature type="binding site" evidence="1">
    <location>
        <position position="153"/>
    </location>
    <ligand>
        <name>D-threo-isocitrate</name>
        <dbReference type="ChEBI" id="CHEBI:15562"/>
    </ligand>
</feature>
<feature type="binding site" evidence="1">
    <location>
        <position position="362"/>
    </location>
    <ligand>
        <name>Mg(2+)</name>
        <dbReference type="ChEBI" id="CHEBI:18420"/>
    </ligand>
</feature>
<feature type="binding site" evidence="1">
    <location>
        <begin position="394"/>
        <end position="400"/>
    </location>
    <ligand>
        <name>NADP(+)</name>
        <dbReference type="ChEBI" id="CHEBI:58349"/>
    </ligand>
</feature>
<feature type="binding site" evidence="1">
    <location>
        <position position="407"/>
    </location>
    <ligand>
        <name>NADP(+)</name>
        <dbReference type="ChEBI" id="CHEBI:58349"/>
    </ligand>
</feature>
<feature type="binding site" evidence="1">
    <location>
        <position position="446"/>
    </location>
    <ligand>
        <name>NADP(+)</name>
        <dbReference type="ChEBI" id="CHEBI:58349"/>
    </ligand>
</feature>
<feature type="binding site" evidence="1">
    <location>
        <position position="450"/>
    </location>
    <ligand>
        <name>NADP(+)</name>
        <dbReference type="ChEBI" id="CHEBI:58349"/>
    </ligand>
</feature>
<feature type="site" description="Critical for catalysis" evidence="1">
    <location>
        <position position="160"/>
    </location>
</feature>
<feature type="site" description="Critical for catalysis" evidence="1">
    <location>
        <position position="237"/>
    </location>
</feature>
<protein>
    <recommendedName>
        <fullName evidence="3">Isocitrate dehydrogenase [NADP]</fullName>
        <shortName evidence="3">IDH</shortName>
        <ecNumber evidence="2">1.1.1.42</ecNumber>
    </recommendedName>
    <alternativeName>
        <fullName>IDP</fullName>
    </alternativeName>
    <alternativeName>
        <fullName evidence="3">NADP(+)-isocitrate dehydrogenase</fullName>
        <shortName evidence="3">NADP(+)-IDH</shortName>
    </alternativeName>
    <alternativeName>
        <fullName>NADP(+)-specific ICDH</fullName>
    </alternativeName>
    <alternativeName>
        <fullName>Oxalosuccinate decarboxylase</fullName>
    </alternativeName>
</protein>
<comment type="function">
    <text evidence="2">Catalyzes the oxidative decarboxylation of isocitrate to 2-oxoglutarate and carbon dioxide with the concomitant reduction of NADP(+).</text>
</comment>
<comment type="catalytic activity">
    <reaction evidence="2">
        <text>D-threo-isocitrate + NADP(+) = 2-oxoglutarate + CO2 + NADPH</text>
        <dbReference type="Rhea" id="RHEA:19629"/>
        <dbReference type="ChEBI" id="CHEBI:15562"/>
        <dbReference type="ChEBI" id="CHEBI:16526"/>
        <dbReference type="ChEBI" id="CHEBI:16810"/>
        <dbReference type="ChEBI" id="CHEBI:57783"/>
        <dbReference type="ChEBI" id="CHEBI:58349"/>
        <dbReference type="EC" id="1.1.1.42"/>
    </reaction>
</comment>
<comment type="cofactor">
    <cofactor evidence="2">
        <name>Mg(2+)</name>
        <dbReference type="ChEBI" id="CHEBI:18420"/>
    </cofactor>
    <cofactor evidence="2">
        <name>Mn(2+)</name>
        <dbReference type="ChEBI" id="CHEBI:29035"/>
    </cofactor>
    <text evidence="1 2">Binds 1 Mg(2+) or Mn(2+) ion per subunit (By similarity). Mn(2+) is the most effective divalent cation in vitro, but the enzyme can also use Mg(2+), Co(2+) and Ni(2+), with lower efficiency (PubMed:8169222).</text>
</comment>
<comment type="activity regulation">
    <text evidence="2">Inhibited by either oxaloacetate or glyoxylate (PubMed:8169222). Also inhibited by the adenine nucleotides AMP, ADP and ATP and by NADPH, which inhibits the activity by 28% when it is added to the assay mixture at 0.25 mM (PubMed:8169222).</text>
</comment>
<comment type="biophysicochemical properties">
    <kinetics>
        <KM evidence="2">4.2 uM for D,L-isocitrate (in the presence of Mn(2+))</KM>
        <KM evidence="2">61.2 uM for D,L-isocitrate (in the presence of Mg(2+))</KM>
        <KM evidence="2">9.3 uM for NADP(+) (in the presence of Mn(2+))</KM>
        <KM evidence="2">13.6 uM for NADP(+) (in the presence of Mg(2+))</KM>
    </kinetics>
    <phDependence>
        <text evidence="2">Optimum pH is 8.5 (PubMed:8169222). Shows 75% of maximal activity between pH 7.5 and 9.5 (PubMed:8169222).</text>
    </phDependence>
</comment>
<comment type="subunit">
    <text evidence="2">Homodimer.</text>
</comment>
<comment type="disruption phenotype">
    <text evidence="2">Essential, it cannot be deleted.</text>
</comment>
<comment type="similarity">
    <text evidence="4">Belongs to the isocitrate and isopropylmalate dehydrogenases family.</text>
</comment>
<proteinExistence type="evidence at protein level"/>
<reference key="1">
    <citation type="journal article" date="1994" name="J. Bacteriol.">
        <title>NADP(+)-isocitrate dehydrogenase from the cyanobacterium Anabaena sp. strain PCC 7120: purification and characterization of the enzyme and cloning, sequencing, and disruption of the icd gene.</title>
        <authorList>
            <person name="Muro-Pastor M.I."/>
            <person name="Florencio F.J."/>
        </authorList>
    </citation>
    <scope>NUCLEOTIDE SEQUENCE [GENOMIC DNA]</scope>
    <scope>FUNCTION</scope>
    <scope>CATALYTIC ACTIVITY</scope>
    <scope>COFACTOR</scope>
    <scope>ACTIVITY REGULATION</scope>
    <scope>BIOPHYSICOCHEMICAL PROPERTIES</scope>
    <scope>SUBUNIT</scope>
    <scope>DISRUPTION PHENOTYPE</scope>
    <source>
        <strain>PCC 7120 / SAG 25.82 / UTEX 2576</strain>
    </source>
</reference>
<reference key="2">
    <citation type="journal article" date="2001" name="DNA Res.">
        <title>Complete genomic sequence of the filamentous nitrogen-fixing cyanobacterium Anabaena sp. strain PCC 7120.</title>
        <authorList>
            <person name="Kaneko T."/>
            <person name="Nakamura Y."/>
            <person name="Wolk C.P."/>
            <person name="Kuritz T."/>
            <person name="Sasamoto S."/>
            <person name="Watanabe A."/>
            <person name="Iriguchi M."/>
            <person name="Ishikawa A."/>
            <person name="Kawashima K."/>
            <person name="Kimura T."/>
            <person name="Kishida Y."/>
            <person name="Kohara M."/>
            <person name="Matsumoto M."/>
            <person name="Matsuno A."/>
            <person name="Muraki A."/>
            <person name="Nakazaki N."/>
            <person name="Shimpo S."/>
            <person name="Sugimoto M."/>
            <person name="Takazawa M."/>
            <person name="Yamada M."/>
            <person name="Yasuda M."/>
            <person name="Tabata S."/>
        </authorList>
    </citation>
    <scope>NUCLEOTIDE SEQUENCE [LARGE SCALE GENOMIC DNA]</scope>
    <source>
        <strain>PCC 7120 / SAG 25.82 / UTEX 2576</strain>
    </source>
</reference>
<accession>P50214</accession>
<sequence length="473" mass="52228">MYNKITPPTTGEKITFKNGEPVVPDNPIIPFIRGDGTGIDIWPATEKVLDAAVAKAYQGKRKISWFKVYAGDEACDLYGTYQYLPEDTLTAIREYGVAIKGPLTTPVGGGIRSLNVALRQIFDLYACVRPCRYYAGTPSPHKNPEKLDVIVYRENTEDIYLGIEWKQGSEIGDRLISILNKELIPATPEHGKKQIPLDSGIGIKPISKTGSQRLVRRAIKHALTLPKDKQQVTLVHKGNIMKYTEGAFRDWGYELATSEFRQETVTERESWILSNKEKNPNISLEDNARQIDPGFDALTPEKKAQIVKEVETVLNSIWESHGNGKWKEKVLVNDRIADSIFQQIQTRPDEYSILATMNLNGDYLSDAAAAIVGGLGMGPGANIGDSCAVFEATHGTAPKHAGLDRINPGSVILSGVMMLEYMGWQEAADLIKKGLSDAIANSQVTYDLARLLEPPVEPLKCSEFADAIIKHFG</sequence>
<gene>
    <name evidence="3" type="primary">icd</name>
    <name type="ordered locus">alr1827</name>
</gene>
<organism>
    <name type="scientific">Nostoc sp. (strain PCC 7120 / SAG 25.82 / UTEX 2576)</name>
    <dbReference type="NCBI Taxonomy" id="103690"/>
    <lineage>
        <taxon>Bacteria</taxon>
        <taxon>Bacillati</taxon>
        <taxon>Cyanobacteriota</taxon>
        <taxon>Cyanophyceae</taxon>
        <taxon>Nostocales</taxon>
        <taxon>Nostocaceae</taxon>
        <taxon>Nostoc</taxon>
    </lineage>
</organism>
<dbReference type="EC" id="1.1.1.42" evidence="2"/>
<dbReference type="EMBL" id="X77654">
    <property type="protein sequence ID" value="CAA54734.1"/>
    <property type="molecule type" value="Genomic_DNA"/>
</dbReference>
<dbReference type="EMBL" id="BA000019">
    <property type="protein sequence ID" value="BAB73526.1"/>
    <property type="molecule type" value="Genomic_DNA"/>
</dbReference>
<dbReference type="PIR" id="A55591">
    <property type="entry name" value="A55591"/>
</dbReference>
<dbReference type="PIR" id="AE2034">
    <property type="entry name" value="AE2034"/>
</dbReference>
<dbReference type="RefSeq" id="WP_010995995.1">
    <property type="nucleotide sequence ID" value="NZ_RSCN01000019.1"/>
</dbReference>
<dbReference type="SMR" id="P50214"/>
<dbReference type="STRING" id="103690.gene:10493845"/>
<dbReference type="KEGG" id="ana:alr1827"/>
<dbReference type="eggNOG" id="COG0538">
    <property type="taxonomic scope" value="Bacteria"/>
</dbReference>
<dbReference type="OrthoDB" id="9806254at2"/>
<dbReference type="Proteomes" id="UP000002483">
    <property type="component" value="Chromosome"/>
</dbReference>
<dbReference type="GO" id="GO:0004450">
    <property type="term" value="F:isocitrate dehydrogenase (NADP+) activity"/>
    <property type="evidence" value="ECO:0007669"/>
    <property type="project" value="UniProtKB-EC"/>
</dbReference>
<dbReference type="GO" id="GO:0000287">
    <property type="term" value="F:magnesium ion binding"/>
    <property type="evidence" value="ECO:0007669"/>
    <property type="project" value="InterPro"/>
</dbReference>
<dbReference type="GO" id="GO:0051287">
    <property type="term" value="F:NAD binding"/>
    <property type="evidence" value="ECO:0007669"/>
    <property type="project" value="InterPro"/>
</dbReference>
<dbReference type="GO" id="GO:0006097">
    <property type="term" value="P:glyoxylate cycle"/>
    <property type="evidence" value="ECO:0007669"/>
    <property type="project" value="UniProtKB-KW"/>
</dbReference>
<dbReference type="GO" id="GO:0006099">
    <property type="term" value="P:tricarboxylic acid cycle"/>
    <property type="evidence" value="ECO:0007669"/>
    <property type="project" value="UniProtKB-KW"/>
</dbReference>
<dbReference type="Gene3D" id="3.40.718.10">
    <property type="entry name" value="Isopropylmalate Dehydrogenase"/>
    <property type="match status" value="2"/>
</dbReference>
<dbReference type="InterPro" id="IPR019818">
    <property type="entry name" value="IsoCit/isopropylmalate_DH_CS"/>
</dbReference>
<dbReference type="InterPro" id="IPR004439">
    <property type="entry name" value="Isocitrate_DH_NADP_dimer_prok"/>
</dbReference>
<dbReference type="InterPro" id="IPR024084">
    <property type="entry name" value="IsoPropMal-DH-like_dom"/>
</dbReference>
<dbReference type="NCBIfam" id="NF005425">
    <property type="entry name" value="PRK07006.1"/>
    <property type="match status" value="1"/>
</dbReference>
<dbReference type="NCBIfam" id="NF005610">
    <property type="entry name" value="PRK07362.1"/>
    <property type="match status" value="1"/>
</dbReference>
<dbReference type="NCBIfam" id="TIGR00183">
    <property type="entry name" value="prok_nadp_idh"/>
    <property type="match status" value="1"/>
</dbReference>
<dbReference type="PANTHER" id="PTHR43504">
    <property type="entry name" value="ISOCITRATE DEHYDROGENASE [NADP]"/>
    <property type="match status" value="1"/>
</dbReference>
<dbReference type="PANTHER" id="PTHR43504:SF1">
    <property type="entry name" value="ISOCITRATE DEHYDROGENASE [NADP]"/>
    <property type="match status" value="1"/>
</dbReference>
<dbReference type="Pfam" id="PF00180">
    <property type="entry name" value="Iso_dh"/>
    <property type="match status" value="1"/>
</dbReference>
<dbReference type="SMART" id="SM01329">
    <property type="entry name" value="Iso_dh"/>
    <property type="match status" value="1"/>
</dbReference>
<dbReference type="SUPFAM" id="SSF53659">
    <property type="entry name" value="Isocitrate/Isopropylmalate dehydrogenase-like"/>
    <property type="match status" value="1"/>
</dbReference>
<dbReference type="PROSITE" id="PS00470">
    <property type="entry name" value="IDH_IMDH"/>
    <property type="match status" value="1"/>
</dbReference>
<keyword id="KW-0329">Glyoxylate bypass</keyword>
<keyword id="KW-0460">Magnesium</keyword>
<keyword id="KW-0464">Manganese</keyword>
<keyword id="KW-0479">Metal-binding</keyword>
<keyword id="KW-0521">NADP</keyword>
<keyword id="KW-0560">Oxidoreductase</keyword>
<keyword id="KW-1185">Reference proteome</keyword>
<keyword id="KW-0816">Tricarboxylic acid cycle</keyword>
<name>IDH_NOSS1</name>